<keyword id="KW-1185">Reference proteome</keyword>
<keyword id="KW-0118">Viral capsid assembly</keyword>
<keyword id="KW-1188">Viral release from host cell</keyword>
<comment type="function">
    <text evidence="3 4">Scaffolding protein involved in the icosahedric procapsid assembly. Coassembles with the capsid proteins to form the procapsid, in which the scaffolding protein is found within the external shell of icosahedrally arranged capsid protein subunits. In a subsequent step the scaffolding protein molecules are released from the procapsid. Facilitates assembly by binding to gp10 hexamers but not the pentamers and locking them into a morphogenically correct conformation.</text>
</comment>
<comment type="similarity">
    <text evidence="2">Belongs to the T7likevirus capsid assembly scaffolding protein family.</text>
</comment>
<organismHost>
    <name type="scientific">Escherichia coli</name>
    <dbReference type="NCBI Taxonomy" id="562"/>
</organismHost>
<sequence length="307" mass="33898">MAESNADVYASFGVNSAVMSGGSVEEHEQNMLALDVAARDGDDAIELASDEVETERDLYDNSDPFGQEDDEGRIQVRIGDGSEPTDVDTGEEGVEGTEGSEEFTPLGETPEELVAASEQLGEHEEGFQEMINIAAERGMSVETIEAIQREYEENEELSAESYAKLAEIGYTKAFIDSYIRGQEALVEQYVNSVIEYAGGRERFDALYNHLETHNPEAAQSLDNALTNRDLATVKAIINLAGESRAKAFGRKPTRSVTNRAIPAKPQATKREGFADRSEMIKAMSDPRYRTDANYRRQVEQKVIDSNF</sequence>
<feature type="chain" id="PRO_0000106519" description="Capsid assembly scaffolding protein">
    <location>
        <begin position="1"/>
        <end position="307"/>
    </location>
</feature>
<feature type="region of interest" description="Disordered" evidence="1">
    <location>
        <begin position="45"/>
        <end position="105"/>
    </location>
</feature>
<feature type="compositionally biased region" description="Acidic residues" evidence="1">
    <location>
        <begin position="45"/>
        <end position="54"/>
    </location>
</feature>
<feature type="compositionally biased region" description="Acidic residues" evidence="1">
    <location>
        <begin position="83"/>
        <end position="101"/>
    </location>
</feature>
<name>SCAF_BPT7</name>
<gene>
    <name type="ordered locus">9</name>
</gene>
<protein>
    <recommendedName>
        <fullName evidence="2">Capsid assembly scaffolding protein</fullName>
    </recommendedName>
    <alternativeName>
        <fullName>Gene product 9</fullName>
        <shortName>Gp9</shortName>
    </alternativeName>
    <alternativeName>
        <fullName evidence="2">Head morphogenesis protein</fullName>
    </alternativeName>
    <alternativeName>
        <fullName evidence="2">Scaffold protein</fullName>
    </alternativeName>
</protein>
<evidence type="ECO:0000256" key="1">
    <source>
        <dbReference type="SAM" id="MobiDB-lite"/>
    </source>
</evidence>
<evidence type="ECO:0000305" key="2"/>
<evidence type="ECO:0000305" key="3">
    <source>
    </source>
</evidence>
<evidence type="ECO:0000305" key="4">
    <source>
    </source>
</evidence>
<accession>P03716</accession>
<dbReference type="EMBL" id="V01146">
    <property type="protein sequence ID" value="CAA24426.1"/>
    <property type="molecule type" value="Genomic_DNA"/>
</dbReference>
<dbReference type="PIR" id="A04343">
    <property type="entry name" value="ACBPT7"/>
</dbReference>
<dbReference type="RefSeq" id="NP_041996.1">
    <property type="nucleotide sequence ID" value="NC_001604.1"/>
</dbReference>
<dbReference type="EMDB" id="EMD-5566"/>
<dbReference type="EMDB" id="EMD-5567"/>
<dbReference type="EMDB" id="EMD-5568"/>
<dbReference type="EMDB" id="EMD-5569"/>
<dbReference type="EMDB" id="EMD-5570"/>
<dbReference type="EMDB" id="EMD-5571"/>
<dbReference type="EMDB" id="EMD-5572"/>
<dbReference type="EMDB" id="EMD-5573"/>
<dbReference type="IntAct" id="P03716">
    <property type="interactions" value="1"/>
</dbReference>
<dbReference type="MINT" id="P03716"/>
<dbReference type="KEGG" id="vg:1261027"/>
<dbReference type="OrthoDB" id="9213at10239"/>
<dbReference type="Proteomes" id="UP000000840">
    <property type="component" value="Genome"/>
</dbReference>
<dbReference type="GO" id="GO:0019069">
    <property type="term" value="P:viral capsid assembly"/>
    <property type="evidence" value="ECO:0007669"/>
    <property type="project" value="InterPro"/>
</dbReference>
<dbReference type="InterPro" id="IPR008768">
    <property type="entry name" value="Gp9-like"/>
</dbReference>
<dbReference type="Pfam" id="PF05396">
    <property type="entry name" value="Phage_T7_Capsid"/>
    <property type="match status" value="1"/>
</dbReference>
<proteinExistence type="evidence at protein level"/>
<organism>
    <name type="scientific">Escherichia phage T7</name>
    <name type="common">Bacteriophage T7</name>
    <dbReference type="NCBI Taxonomy" id="10760"/>
    <lineage>
        <taxon>Viruses</taxon>
        <taxon>Duplodnaviria</taxon>
        <taxon>Heunggongvirae</taxon>
        <taxon>Uroviricota</taxon>
        <taxon>Caudoviricetes</taxon>
        <taxon>Autographiviridae</taxon>
        <taxon>Studiervirinae</taxon>
        <taxon>Teseptimavirus</taxon>
        <taxon>Teseptimavirus T7</taxon>
    </lineage>
</organism>
<reference key="1">
    <citation type="journal article" date="1983" name="J. Mol. Biol.">
        <title>Complete nucleotide sequence of bacteriophage T7 DNA and the locations of T7 genetic elements.</title>
        <authorList>
            <person name="Dunn J.J."/>
            <person name="Studier F.W."/>
        </authorList>
    </citation>
    <scope>NUCLEOTIDE SEQUENCE [LARGE SCALE GENOMIC DNA]</scope>
</reference>
<reference key="2">
    <citation type="journal article" date="2003" name="Adv. Protein Chem.">
        <title>Molecular mechanisms in bacteriophage T7 procapsid assembly, maturation, and DNA containment.</title>
        <authorList>
            <person name="Cerritelli M.E."/>
            <person name="Conway J.F."/>
            <person name="Cheng N."/>
            <person name="Trus B.L."/>
            <person name="Steven A.C."/>
        </authorList>
    </citation>
    <scope>FUNCTION IN VIRION MATURATION</scope>
</reference>
<reference key="3">
    <citation type="journal article" date="2005" name="EMBO J.">
        <title>Maturation of phage T7 involves structural modification of both shell and inner core components.</title>
        <authorList>
            <person name="Agirrezabala X."/>
            <person name="Martin-Benito J."/>
            <person name="Caston J.R."/>
            <person name="Miranda R."/>
            <person name="Valpuesta J.M."/>
            <person name="Carrascosa J.L."/>
        </authorList>
    </citation>
    <scope>FUNCTION</scope>
</reference>